<dbReference type="EC" id="3.2.2.27"/>
<dbReference type="EMBL" id="AF222894">
    <property type="protein sequence ID" value="AAF30961.1"/>
    <property type="molecule type" value="Genomic_DNA"/>
</dbReference>
<dbReference type="RefSeq" id="WP_006688756.1">
    <property type="nucleotide sequence ID" value="NC_002162.1"/>
</dbReference>
<dbReference type="SMR" id="Q9PPU2"/>
<dbReference type="STRING" id="273119.UU548"/>
<dbReference type="EnsemblBacteria" id="AAF30961">
    <property type="protein sequence ID" value="AAF30961"/>
    <property type="gene ID" value="UU548"/>
</dbReference>
<dbReference type="GeneID" id="29672495"/>
<dbReference type="KEGG" id="uur:UU548"/>
<dbReference type="eggNOG" id="COG0692">
    <property type="taxonomic scope" value="Bacteria"/>
</dbReference>
<dbReference type="HOGENOM" id="CLU_032162_3_2_14"/>
<dbReference type="OrthoDB" id="9804372at2"/>
<dbReference type="Proteomes" id="UP000000423">
    <property type="component" value="Chromosome"/>
</dbReference>
<dbReference type="GO" id="GO:0005737">
    <property type="term" value="C:cytoplasm"/>
    <property type="evidence" value="ECO:0007669"/>
    <property type="project" value="UniProtKB-SubCell"/>
</dbReference>
<dbReference type="GO" id="GO:0004844">
    <property type="term" value="F:uracil DNA N-glycosylase activity"/>
    <property type="evidence" value="ECO:0007669"/>
    <property type="project" value="UniProtKB-UniRule"/>
</dbReference>
<dbReference type="GO" id="GO:0097510">
    <property type="term" value="P:base-excision repair, AP site formation via deaminated base removal"/>
    <property type="evidence" value="ECO:0007669"/>
    <property type="project" value="TreeGrafter"/>
</dbReference>
<dbReference type="CDD" id="cd10027">
    <property type="entry name" value="UDG-F1-like"/>
    <property type="match status" value="1"/>
</dbReference>
<dbReference type="Gene3D" id="3.40.470.10">
    <property type="entry name" value="Uracil-DNA glycosylase-like domain"/>
    <property type="match status" value="1"/>
</dbReference>
<dbReference type="HAMAP" id="MF_00148">
    <property type="entry name" value="UDG"/>
    <property type="match status" value="1"/>
</dbReference>
<dbReference type="InterPro" id="IPR002043">
    <property type="entry name" value="UDG_fam1"/>
</dbReference>
<dbReference type="InterPro" id="IPR018085">
    <property type="entry name" value="Ura-DNA_Glyclase_AS"/>
</dbReference>
<dbReference type="InterPro" id="IPR005122">
    <property type="entry name" value="Uracil-DNA_glycosylase-like"/>
</dbReference>
<dbReference type="InterPro" id="IPR036895">
    <property type="entry name" value="Uracil-DNA_glycosylase-like_sf"/>
</dbReference>
<dbReference type="NCBIfam" id="NF003588">
    <property type="entry name" value="PRK05254.1-1"/>
    <property type="match status" value="1"/>
</dbReference>
<dbReference type="NCBIfam" id="NF003589">
    <property type="entry name" value="PRK05254.1-2"/>
    <property type="match status" value="1"/>
</dbReference>
<dbReference type="NCBIfam" id="NF003592">
    <property type="entry name" value="PRK05254.1-5"/>
    <property type="match status" value="1"/>
</dbReference>
<dbReference type="NCBIfam" id="TIGR00628">
    <property type="entry name" value="ung"/>
    <property type="match status" value="1"/>
</dbReference>
<dbReference type="PANTHER" id="PTHR11264">
    <property type="entry name" value="URACIL-DNA GLYCOSYLASE"/>
    <property type="match status" value="1"/>
</dbReference>
<dbReference type="PANTHER" id="PTHR11264:SF0">
    <property type="entry name" value="URACIL-DNA GLYCOSYLASE"/>
    <property type="match status" value="1"/>
</dbReference>
<dbReference type="Pfam" id="PF03167">
    <property type="entry name" value="UDG"/>
    <property type="match status" value="1"/>
</dbReference>
<dbReference type="SMART" id="SM00986">
    <property type="entry name" value="UDG"/>
    <property type="match status" value="1"/>
</dbReference>
<dbReference type="SMART" id="SM00987">
    <property type="entry name" value="UreE_C"/>
    <property type="match status" value="1"/>
</dbReference>
<dbReference type="SUPFAM" id="SSF52141">
    <property type="entry name" value="Uracil-DNA glycosylase-like"/>
    <property type="match status" value="1"/>
</dbReference>
<dbReference type="PROSITE" id="PS00130">
    <property type="entry name" value="U_DNA_GLYCOSYLASE"/>
    <property type="match status" value="1"/>
</dbReference>
<evidence type="ECO:0000250" key="1"/>
<evidence type="ECO:0000305" key="2"/>
<feature type="chain" id="PRO_0000176160" description="Uracil-DNA glycosylase">
    <location>
        <begin position="1"/>
        <end position="212"/>
    </location>
</feature>
<feature type="active site" description="Proton acceptor" evidence="1">
    <location>
        <position position="59"/>
    </location>
</feature>
<accession>Q9PPU2</accession>
<gene>
    <name type="primary">ung</name>
    <name type="ordered locus">UU548</name>
</gene>
<sequence>MKWKEFIINETKQSYLKNIIKKINNIENHQVVFPLKKQRFRCFDFFDIEQTKVVILGQDPYHTPKIANGLCFSVDLGNNLPGSLINIFKALEYDLQIKRTNPDLSDWAKQGVLLLNTVLTVNAHQPNSHKNFGYEELIKNVFNELRKQKHVVYLLWGKQAMSYINLIDQKQNLILCASHPSPLSAHRGFLTCKHFSKCNDYLIKHLRTPIKW</sequence>
<protein>
    <recommendedName>
        <fullName>Uracil-DNA glycosylase</fullName>
        <shortName>UDG</shortName>
        <ecNumber>3.2.2.27</ecNumber>
    </recommendedName>
</protein>
<proteinExistence type="inferred from homology"/>
<keyword id="KW-0963">Cytoplasm</keyword>
<keyword id="KW-0227">DNA damage</keyword>
<keyword id="KW-0234">DNA repair</keyword>
<keyword id="KW-0378">Hydrolase</keyword>
<keyword id="KW-1185">Reference proteome</keyword>
<organism>
    <name type="scientific">Ureaplasma parvum serovar 3 (strain ATCC 700970)</name>
    <dbReference type="NCBI Taxonomy" id="273119"/>
    <lineage>
        <taxon>Bacteria</taxon>
        <taxon>Bacillati</taxon>
        <taxon>Mycoplasmatota</taxon>
        <taxon>Mycoplasmoidales</taxon>
        <taxon>Mycoplasmoidaceae</taxon>
        <taxon>Ureaplasma</taxon>
    </lineage>
</organism>
<name>UNG_UREPA</name>
<comment type="function">
    <text evidence="1">Excises uracil residues from the DNA which can arise as a result of misincorporation of dUMP residues by DNA polymerase or due to deamination of cytosine.</text>
</comment>
<comment type="catalytic activity">
    <reaction>
        <text>Hydrolyzes single-stranded DNA or mismatched double-stranded DNA and polynucleotides, releasing free uracil.</text>
        <dbReference type="EC" id="3.2.2.27"/>
    </reaction>
</comment>
<comment type="subcellular location">
    <subcellularLocation>
        <location evidence="1">Cytoplasm</location>
    </subcellularLocation>
</comment>
<comment type="similarity">
    <text evidence="2">Belongs to the uracil-DNA glycosylase (UDG) superfamily. UNG family.</text>
</comment>
<reference key="1">
    <citation type="journal article" date="2000" name="Nature">
        <title>The complete sequence of the mucosal pathogen Ureaplasma urealyticum.</title>
        <authorList>
            <person name="Glass J.I."/>
            <person name="Lefkowitz E.J."/>
            <person name="Glass J.S."/>
            <person name="Heiner C.R."/>
            <person name="Chen E.Y."/>
            <person name="Cassell G.H."/>
        </authorList>
    </citation>
    <scope>NUCLEOTIDE SEQUENCE [LARGE SCALE GENOMIC DNA]</scope>
    <source>
        <strain>ATCC 700970</strain>
    </source>
</reference>